<feature type="chain" id="PRO_0000263092" description="Putative BCoR-like protein 2">
    <location>
        <begin position="1"/>
        <end position="145"/>
    </location>
</feature>
<feature type="region of interest" description="Disordered" evidence="1">
    <location>
        <begin position="1"/>
        <end position="58"/>
    </location>
</feature>
<feature type="compositionally biased region" description="Basic and acidic residues" evidence="1">
    <location>
        <begin position="1"/>
        <end position="27"/>
    </location>
</feature>
<feature type="compositionally biased region" description="Polar residues" evidence="1">
    <location>
        <begin position="38"/>
        <end position="52"/>
    </location>
</feature>
<sequence length="145" mass="16258">MKEKLSKKRAEVKGNRSWLEEFLKPSDNEEGPPPKNKVLSNNASSQKPTHSSCIPLLRLPDKQQKVNESIKTDMLCTDKEEECPAASLLQKYTNNSEKPSGKRQCKTKHLISQDLRQGFLLTGKCYVENADGKIPLGTCFLLGLI</sequence>
<accession>Q8N888</accession>
<dbReference type="EMBL" id="AK097140">
    <property type="protein sequence ID" value="BAC04961.1"/>
    <property type="molecule type" value="mRNA"/>
</dbReference>
<dbReference type="EMBL" id="AC010133">
    <property type="status" value="NOT_ANNOTATED_CDS"/>
    <property type="molecule type" value="Genomic_DNA"/>
</dbReference>
<dbReference type="SMR" id="Q8N888"/>
<dbReference type="IntAct" id="Q8N888">
    <property type="interactions" value="1"/>
</dbReference>
<dbReference type="iPTMnet" id="Q8N888"/>
<dbReference type="PhosphoSitePlus" id="Q8N888"/>
<dbReference type="BioMuta" id="HGNC:23953"/>
<dbReference type="PeptideAtlas" id="Q8N888"/>
<dbReference type="ProteomicsDB" id="72384"/>
<dbReference type="AGR" id="HGNC:23953"/>
<dbReference type="GeneCards" id="BCORP1"/>
<dbReference type="HGNC" id="HGNC:23953">
    <property type="gene designation" value="BCORP1"/>
</dbReference>
<dbReference type="neXtProt" id="NX_Q8N888"/>
<dbReference type="InParanoid" id="Q8N888"/>
<dbReference type="PAN-GO" id="Q8N888">
    <property type="GO annotations" value="3 GO annotations based on evolutionary models"/>
</dbReference>
<dbReference type="PathwayCommons" id="Q8N888"/>
<dbReference type="Pharos" id="Q8N888">
    <property type="development level" value="Tdark"/>
</dbReference>
<dbReference type="PRO" id="PR:Q8N888"/>
<dbReference type="Proteomes" id="UP000005640">
    <property type="component" value="Unplaced"/>
</dbReference>
<dbReference type="RNAct" id="Q8N888">
    <property type="molecule type" value="protein"/>
</dbReference>
<dbReference type="InterPro" id="IPR031628">
    <property type="entry name" value="BCOR"/>
</dbReference>
<dbReference type="InterPro" id="IPR047144">
    <property type="entry name" value="BCOR-like"/>
</dbReference>
<dbReference type="PANTHER" id="PTHR24117">
    <property type="entry name" value="AGAP007537-PB"/>
    <property type="match status" value="1"/>
</dbReference>
<dbReference type="PANTHER" id="PTHR24117:SF8">
    <property type="entry name" value="BCL-6 COREPRESSOR"/>
    <property type="match status" value="1"/>
</dbReference>
<dbReference type="Pfam" id="PF15808">
    <property type="entry name" value="BCOR"/>
    <property type="match status" value="1"/>
</dbReference>
<gene>
    <name type="primary">BCORP1</name>
    <name type="synonym">BCORL2</name>
</gene>
<reference key="1">
    <citation type="journal article" date="2004" name="Nat. Genet.">
        <title>Complete sequencing and characterization of 21,243 full-length human cDNAs.</title>
        <authorList>
            <person name="Ota T."/>
            <person name="Suzuki Y."/>
            <person name="Nishikawa T."/>
            <person name="Otsuki T."/>
            <person name="Sugiyama T."/>
            <person name="Irie R."/>
            <person name="Wakamatsu A."/>
            <person name="Hayashi K."/>
            <person name="Sato H."/>
            <person name="Nagai K."/>
            <person name="Kimura K."/>
            <person name="Makita H."/>
            <person name="Sekine M."/>
            <person name="Obayashi M."/>
            <person name="Nishi T."/>
            <person name="Shibahara T."/>
            <person name="Tanaka T."/>
            <person name="Ishii S."/>
            <person name="Yamamoto J."/>
            <person name="Saito K."/>
            <person name="Kawai Y."/>
            <person name="Isono Y."/>
            <person name="Nakamura Y."/>
            <person name="Nagahari K."/>
            <person name="Murakami K."/>
            <person name="Yasuda T."/>
            <person name="Iwayanagi T."/>
            <person name="Wagatsuma M."/>
            <person name="Shiratori A."/>
            <person name="Sudo H."/>
            <person name="Hosoiri T."/>
            <person name="Kaku Y."/>
            <person name="Kodaira H."/>
            <person name="Kondo H."/>
            <person name="Sugawara M."/>
            <person name="Takahashi M."/>
            <person name="Kanda K."/>
            <person name="Yokoi T."/>
            <person name="Furuya T."/>
            <person name="Kikkawa E."/>
            <person name="Omura Y."/>
            <person name="Abe K."/>
            <person name="Kamihara K."/>
            <person name="Katsuta N."/>
            <person name="Sato K."/>
            <person name="Tanikawa M."/>
            <person name="Yamazaki M."/>
            <person name="Ninomiya K."/>
            <person name="Ishibashi T."/>
            <person name="Yamashita H."/>
            <person name="Murakawa K."/>
            <person name="Fujimori K."/>
            <person name="Tanai H."/>
            <person name="Kimata M."/>
            <person name="Watanabe M."/>
            <person name="Hiraoka S."/>
            <person name="Chiba Y."/>
            <person name="Ishida S."/>
            <person name="Ono Y."/>
            <person name="Takiguchi S."/>
            <person name="Watanabe S."/>
            <person name="Yosida M."/>
            <person name="Hotuta T."/>
            <person name="Kusano J."/>
            <person name="Kanehori K."/>
            <person name="Takahashi-Fujii A."/>
            <person name="Hara H."/>
            <person name="Tanase T.-O."/>
            <person name="Nomura Y."/>
            <person name="Togiya S."/>
            <person name="Komai F."/>
            <person name="Hara R."/>
            <person name="Takeuchi K."/>
            <person name="Arita M."/>
            <person name="Imose N."/>
            <person name="Musashino K."/>
            <person name="Yuuki H."/>
            <person name="Oshima A."/>
            <person name="Sasaki N."/>
            <person name="Aotsuka S."/>
            <person name="Yoshikawa Y."/>
            <person name="Matsunawa H."/>
            <person name="Ichihara T."/>
            <person name="Shiohata N."/>
            <person name="Sano S."/>
            <person name="Moriya S."/>
            <person name="Momiyama H."/>
            <person name="Satoh N."/>
            <person name="Takami S."/>
            <person name="Terashima Y."/>
            <person name="Suzuki O."/>
            <person name="Nakagawa S."/>
            <person name="Senoh A."/>
            <person name="Mizoguchi H."/>
            <person name="Goto Y."/>
            <person name="Shimizu F."/>
            <person name="Wakebe H."/>
            <person name="Hishigaki H."/>
            <person name="Watanabe T."/>
            <person name="Sugiyama A."/>
            <person name="Takemoto M."/>
            <person name="Kawakami B."/>
            <person name="Yamazaki M."/>
            <person name="Watanabe K."/>
            <person name="Kumagai A."/>
            <person name="Itakura S."/>
            <person name="Fukuzumi Y."/>
            <person name="Fujimori Y."/>
            <person name="Komiyama M."/>
            <person name="Tashiro H."/>
            <person name="Tanigami A."/>
            <person name="Fujiwara T."/>
            <person name="Ono T."/>
            <person name="Yamada K."/>
            <person name="Fujii Y."/>
            <person name="Ozaki K."/>
            <person name="Hirao M."/>
            <person name="Ohmori Y."/>
            <person name="Kawabata A."/>
            <person name="Hikiji T."/>
            <person name="Kobatake N."/>
            <person name="Inagaki H."/>
            <person name="Ikema Y."/>
            <person name="Okamoto S."/>
            <person name="Okitani R."/>
            <person name="Kawakami T."/>
            <person name="Noguchi S."/>
            <person name="Itoh T."/>
            <person name="Shigeta K."/>
            <person name="Senba T."/>
            <person name="Matsumura K."/>
            <person name="Nakajima Y."/>
            <person name="Mizuno T."/>
            <person name="Morinaga M."/>
            <person name="Sasaki M."/>
            <person name="Togashi T."/>
            <person name="Oyama M."/>
            <person name="Hata H."/>
            <person name="Watanabe M."/>
            <person name="Komatsu T."/>
            <person name="Mizushima-Sugano J."/>
            <person name="Satoh T."/>
            <person name="Shirai Y."/>
            <person name="Takahashi Y."/>
            <person name="Nakagawa K."/>
            <person name="Okumura K."/>
            <person name="Nagase T."/>
            <person name="Nomura N."/>
            <person name="Kikuchi H."/>
            <person name="Masuho Y."/>
            <person name="Yamashita R."/>
            <person name="Nakai K."/>
            <person name="Yada T."/>
            <person name="Nakamura Y."/>
            <person name="Ohara O."/>
            <person name="Isogai T."/>
            <person name="Sugano S."/>
        </authorList>
    </citation>
    <scope>NUCLEOTIDE SEQUENCE [LARGE SCALE MRNA]</scope>
    <source>
        <tissue>Spleen</tissue>
    </source>
</reference>
<reference key="2">
    <citation type="journal article" date="2003" name="Nature">
        <title>The male-specific region of the human Y chromosome is a mosaic of discrete sequence classes.</title>
        <authorList>
            <person name="Skaletsky H."/>
            <person name="Kuroda-Kawaguchi T."/>
            <person name="Minx P.J."/>
            <person name="Cordum H.S."/>
            <person name="Hillier L.W."/>
            <person name="Brown L.G."/>
            <person name="Repping S."/>
            <person name="Pyntikova T."/>
            <person name="Ali J."/>
            <person name="Bieri T."/>
            <person name="Chinwalla A."/>
            <person name="Delehaunty A."/>
            <person name="Delehaunty K."/>
            <person name="Du H."/>
            <person name="Fewell G."/>
            <person name="Fulton L."/>
            <person name="Fulton R."/>
            <person name="Graves T.A."/>
            <person name="Hou S.-F."/>
            <person name="Latrielle P."/>
            <person name="Leonard S."/>
            <person name="Mardis E."/>
            <person name="Maupin R."/>
            <person name="McPherson J."/>
            <person name="Miner T."/>
            <person name="Nash W."/>
            <person name="Nguyen C."/>
            <person name="Ozersky P."/>
            <person name="Pepin K."/>
            <person name="Rock S."/>
            <person name="Rohlfing T."/>
            <person name="Scott K."/>
            <person name="Schultz B."/>
            <person name="Strong C."/>
            <person name="Tin-Wollam A."/>
            <person name="Yang S.-P."/>
            <person name="Waterston R.H."/>
            <person name="Wilson R.K."/>
            <person name="Rozen S."/>
            <person name="Page D.C."/>
        </authorList>
    </citation>
    <scope>NUCLEOTIDE SEQUENCE [LARGE SCALE GENOMIC DNA]</scope>
</reference>
<protein>
    <recommendedName>
        <fullName>Putative BCoR-like protein 2</fullName>
    </recommendedName>
    <alternativeName>
        <fullName>BCL-6 corepressor pseudogene 1</fullName>
    </alternativeName>
    <alternativeName>
        <fullName>BCL-6 corepressor-like protein 2</fullName>
    </alternativeName>
</protein>
<proteinExistence type="uncertain"/>
<evidence type="ECO:0000256" key="1">
    <source>
        <dbReference type="SAM" id="MobiDB-lite"/>
    </source>
</evidence>
<evidence type="ECO:0000305" key="2"/>
<keyword id="KW-1185">Reference proteome</keyword>
<name>BCOR2_HUMAN</name>
<comment type="similarity">
    <text evidence="2">Belongs to the BCOR family.</text>
</comment>
<comment type="caution">
    <text evidence="2">Could be the product of a pseudogene.</text>
</comment>
<organism>
    <name type="scientific">Homo sapiens</name>
    <name type="common">Human</name>
    <dbReference type="NCBI Taxonomy" id="9606"/>
    <lineage>
        <taxon>Eukaryota</taxon>
        <taxon>Metazoa</taxon>
        <taxon>Chordata</taxon>
        <taxon>Craniata</taxon>
        <taxon>Vertebrata</taxon>
        <taxon>Euteleostomi</taxon>
        <taxon>Mammalia</taxon>
        <taxon>Eutheria</taxon>
        <taxon>Euarchontoglires</taxon>
        <taxon>Primates</taxon>
        <taxon>Haplorrhini</taxon>
        <taxon>Catarrhini</taxon>
        <taxon>Hominidae</taxon>
        <taxon>Homo</taxon>
    </lineage>
</organism>